<proteinExistence type="evidence at transcript level"/>
<keyword id="KW-0010">Activator</keyword>
<keyword id="KW-0515">Mutator protein</keyword>
<keyword id="KW-1185">Reference proteome</keyword>
<keyword id="KW-0678">Repressor</keyword>
<keyword id="KW-0804">Transcription</keyword>
<keyword id="KW-0805">Transcription regulation</keyword>
<keyword id="KW-0814">Transposable element</keyword>
<keyword id="KW-0815">Transposition</keyword>
<sequence>MFRMDSSGRRSRSRRSRGSSGAPNMFEGTTTSRSRQEQLLASLEQMRGSSGPSNTEGTTSRAADLVAPTMAPTAEAAVDAEAAVDAEAEEAAAELDDGEETSGADASTEEAATQAPPRRAIRYRRSLTLKPSKPFDQRRVIEPKGTRAWKEVSWDGTGHRTPILTELGICLRFAYPAMVTEGGQEIAAHYWAHWDLKPYGNDGTHTSKVWDLFWGQFRVCDPYTLDDSYVREVFNGSADRAVKGMMYKARLRAVTVYQKRQGNYCDANMAKEIHLTAQQYKESEVDWLSHHSDAWAWMCEYWASEEFLAISNRNRMNRLSKPGVHFFGADGHVGKAARMAARNGVEPTLLQVFVEGHKGPDPNHPEILNDSNATEKLARYIDNVREKNGPDTDWLTGEFDTEAAYKAGGGVPHGRLAIGDGVVPRRSYTRRSNFSAGSNRPRRPSAREGELLEKMTQMEESMAQYKQQVQQQMQQMQNWMLHQMYGGAGTQFGMPPFQQPPIITHPVSGQSSDRSTAAADGSQGSATSVQDQLMPLGVIGGQMMPWAPRQPGIWPPMQTQMPPPMPWGFPPRGQSQSPGLPSHSPGSGSGSHHASPPPDQSTFMDLLMNTSGGGSNDPPTE</sequence>
<name>MOSA_MAIZE</name>
<organism>
    <name type="scientific">Zea mays</name>
    <name type="common">Maize</name>
    <dbReference type="NCBI Taxonomy" id="4577"/>
    <lineage>
        <taxon>Eukaryota</taxon>
        <taxon>Viridiplantae</taxon>
        <taxon>Streptophyta</taxon>
        <taxon>Embryophyta</taxon>
        <taxon>Tracheophyta</taxon>
        <taxon>Spermatophyta</taxon>
        <taxon>Magnoliopsida</taxon>
        <taxon>Liliopsida</taxon>
        <taxon>Poales</taxon>
        <taxon>Poaceae</taxon>
        <taxon>PACMAD clade</taxon>
        <taxon>Panicoideae</taxon>
        <taxon>Andropogonodae</taxon>
        <taxon>Andropogoneae</taxon>
        <taxon>Tripsacinae</taxon>
        <taxon>Zea</taxon>
    </lineage>
</organism>
<accession>P15268</accession>
<feature type="chain" id="PRO_0000096541" description="Autonomous transposable element EN-1 mosaic protein">
    <location>
        <begin position="1"/>
        <end position="621"/>
    </location>
</feature>
<feature type="region of interest" description="Disordered" evidence="1">
    <location>
        <begin position="1"/>
        <end position="119"/>
    </location>
</feature>
<feature type="region of interest" description="Disordered" evidence="1">
    <location>
        <begin position="428"/>
        <end position="447"/>
    </location>
</feature>
<feature type="region of interest" description="Disordered" evidence="1">
    <location>
        <begin position="498"/>
        <end position="530"/>
    </location>
</feature>
<feature type="region of interest" description="Disordered" evidence="1">
    <location>
        <begin position="549"/>
        <end position="621"/>
    </location>
</feature>
<feature type="compositionally biased region" description="Polar residues" evidence="1">
    <location>
        <begin position="27"/>
        <end position="39"/>
    </location>
</feature>
<feature type="compositionally biased region" description="Polar residues" evidence="1">
    <location>
        <begin position="47"/>
        <end position="61"/>
    </location>
</feature>
<feature type="compositionally biased region" description="Acidic residues" evidence="1">
    <location>
        <begin position="82"/>
        <end position="102"/>
    </location>
</feature>
<feature type="compositionally biased region" description="Low complexity" evidence="1">
    <location>
        <begin position="570"/>
        <end position="594"/>
    </location>
</feature>
<protein>
    <recommendedName>
        <fullName>Autonomous transposable element EN-1 mosaic protein</fullName>
    </recommendedName>
    <alternativeName>
        <fullName>Suppressor-mutator system protein</fullName>
        <shortName>SPM</shortName>
    </alternativeName>
</protein>
<evidence type="ECO:0000256" key="1">
    <source>
        <dbReference type="SAM" id="MobiDB-lite"/>
    </source>
</evidence>
<dbReference type="EMBL" id="M25427">
    <property type="protein sequence ID" value="AAA66268.1"/>
    <property type="molecule type" value="Genomic_DNA"/>
</dbReference>
<dbReference type="PIR" id="S28365">
    <property type="entry name" value="S28365"/>
</dbReference>
<dbReference type="SMR" id="P15268"/>
<dbReference type="FunCoup" id="P15268">
    <property type="interactions" value="1068"/>
</dbReference>
<dbReference type="STRING" id="4577.P15268"/>
<dbReference type="MaizeGDB" id="65370"/>
<dbReference type="InParanoid" id="P15268"/>
<dbReference type="Proteomes" id="UP000007305">
    <property type="component" value="Unplaced"/>
</dbReference>
<dbReference type="ExpressionAtlas" id="P15268">
    <property type="expression patterns" value="baseline and differential"/>
</dbReference>
<dbReference type="GO" id="GO:0032196">
    <property type="term" value="P:transposition"/>
    <property type="evidence" value="ECO:0007669"/>
    <property type="project" value="UniProtKB-KW"/>
</dbReference>
<dbReference type="InterPro" id="IPR039266">
    <property type="entry name" value="EN-1/SPM"/>
</dbReference>
<dbReference type="InterPro" id="IPR004252">
    <property type="entry name" value="Probable_transposase_24"/>
</dbReference>
<dbReference type="PANTHER" id="PTHR33157:SF14">
    <property type="entry name" value="AUTONOMOUS TRANSPOSABLE ELEMENT EN-1 MOSAIC PROTEIN"/>
    <property type="match status" value="1"/>
</dbReference>
<dbReference type="PANTHER" id="PTHR33157">
    <property type="entry name" value="AUTONOMOUS TRANSPOSABLE ELEMENT EN-1 MOSAIC PROTEIN-RELATED"/>
    <property type="match status" value="1"/>
</dbReference>
<dbReference type="Pfam" id="PF03004">
    <property type="entry name" value="Transposase_24"/>
    <property type="match status" value="1"/>
</dbReference>
<reference key="1">
    <citation type="journal article" date="1986" name="EMBO J.">
        <title>Molecular analysis of the En/Spm transposable element system of Zea mays.</title>
        <authorList>
            <person name="Pereira A."/>
            <person name="Cuypers H."/>
            <person name="Gierl A."/>
            <person name="Schwarz-Sommer Z."/>
            <person name="Saedler H."/>
        </authorList>
    </citation>
    <scope>NUCLEOTIDE SEQUENCE [GENOMIC DNA]</scope>
</reference>
<comment type="function">
    <text>This protein has most probably three functions; the mutator (M) function, for excision and transposition; the suppressor (S) function, which inhibits residual gene activity of certain alleles in which inhibitor elements are integrated; an activator (A) function is proposed, because inactive SPM can be activated by a second SPM.</text>
</comment>